<proteinExistence type="evidence at transcript level"/>
<dbReference type="EC" id="2.4.-.-"/>
<dbReference type="EMBL" id="AP005842">
    <property type="protein sequence ID" value="BAD26319.1"/>
    <property type="molecule type" value="Genomic_DNA"/>
</dbReference>
<dbReference type="EMBL" id="AP008208">
    <property type="protein sequence ID" value="BAH91721.1"/>
    <property type="status" value="ALT_SEQ"/>
    <property type="molecule type" value="Genomic_DNA"/>
</dbReference>
<dbReference type="EMBL" id="AP014958">
    <property type="protein sequence ID" value="BAS78948.1"/>
    <property type="molecule type" value="Genomic_DNA"/>
</dbReference>
<dbReference type="EMBL" id="AK242816">
    <property type="protein sequence ID" value="BAH01351.1"/>
    <property type="molecule type" value="mRNA"/>
</dbReference>
<dbReference type="RefSeq" id="XP_015622605.1">
    <property type="nucleotide sequence ID" value="XM_015767119.1"/>
</dbReference>
<dbReference type="SMR" id="Q6H4N0"/>
<dbReference type="FunCoup" id="Q6H4N0">
    <property type="interactions" value="1"/>
</dbReference>
<dbReference type="STRING" id="39947.Q6H4N0"/>
<dbReference type="CAZy" id="GT47">
    <property type="family name" value="Glycosyltransferase Family 47"/>
</dbReference>
<dbReference type="PaxDb" id="39947-Q6H4N0"/>
<dbReference type="EnsemblPlants" id="Os02t0520750-01">
    <property type="protein sequence ID" value="Os02t0520750-01"/>
    <property type="gene ID" value="Os02g0520750"/>
</dbReference>
<dbReference type="Gramene" id="Os02t0520750-01">
    <property type="protein sequence ID" value="Os02t0520750-01"/>
    <property type="gene ID" value="Os02g0520750"/>
</dbReference>
<dbReference type="KEGG" id="dosa:Os02g0520750"/>
<dbReference type="eggNOG" id="KOG1021">
    <property type="taxonomic scope" value="Eukaryota"/>
</dbReference>
<dbReference type="HOGENOM" id="CLU_039682_1_0_1"/>
<dbReference type="InParanoid" id="Q6H4N0"/>
<dbReference type="OMA" id="FISHKWP"/>
<dbReference type="OrthoDB" id="1924787at2759"/>
<dbReference type="Proteomes" id="UP000000763">
    <property type="component" value="Chromosome 2"/>
</dbReference>
<dbReference type="Proteomes" id="UP000059680">
    <property type="component" value="Chromosome 2"/>
</dbReference>
<dbReference type="GO" id="GO:0000139">
    <property type="term" value="C:Golgi membrane"/>
    <property type="evidence" value="ECO:0007669"/>
    <property type="project" value="UniProtKB-SubCell"/>
</dbReference>
<dbReference type="GO" id="GO:0016757">
    <property type="term" value="F:glycosyltransferase activity"/>
    <property type="evidence" value="ECO:0007669"/>
    <property type="project" value="UniProtKB-KW"/>
</dbReference>
<dbReference type="GO" id="GO:0071555">
    <property type="term" value="P:cell wall organization"/>
    <property type="evidence" value="ECO:0007669"/>
    <property type="project" value="UniProtKB-KW"/>
</dbReference>
<dbReference type="GO" id="GO:0010417">
    <property type="term" value="P:glucuronoxylan biosynthetic process"/>
    <property type="evidence" value="ECO:0000318"/>
    <property type="project" value="GO_Central"/>
</dbReference>
<dbReference type="GO" id="GO:0009834">
    <property type="term" value="P:plant-type secondary cell wall biogenesis"/>
    <property type="evidence" value="ECO:0000318"/>
    <property type="project" value="GO_Central"/>
</dbReference>
<dbReference type="GO" id="GO:0006486">
    <property type="term" value="P:protein glycosylation"/>
    <property type="evidence" value="ECO:0007669"/>
    <property type="project" value="InterPro"/>
</dbReference>
<dbReference type="InterPro" id="IPR004263">
    <property type="entry name" value="Exostosin"/>
</dbReference>
<dbReference type="InterPro" id="IPR040911">
    <property type="entry name" value="Exostosin_GT47"/>
</dbReference>
<dbReference type="PANTHER" id="PTHR11062">
    <property type="entry name" value="EXOSTOSIN HEPARAN SULFATE GLYCOSYLTRANSFERASE -RELATED"/>
    <property type="match status" value="1"/>
</dbReference>
<dbReference type="PANTHER" id="PTHR11062:SF227">
    <property type="entry name" value="GLUCURONOSYLTRANSFERASE OS02G0520750-RELATED"/>
    <property type="match status" value="1"/>
</dbReference>
<dbReference type="Pfam" id="PF03016">
    <property type="entry name" value="Exostosin_GT47"/>
    <property type="match status" value="1"/>
</dbReference>
<comment type="function">
    <text evidence="1">Involved in the synthesis of glucuronoxylan hemicellulose in secondary cell walls.</text>
</comment>
<comment type="subcellular location">
    <subcellularLocation>
        <location evidence="1">Golgi apparatus membrane</location>
        <topology evidence="1">Single-pass type II membrane protein</topology>
    </subcellularLocation>
</comment>
<comment type="similarity">
    <text evidence="3">Belongs to the glycosyltransferase 47 family.</text>
</comment>
<comment type="sequence caution" evidence="3">
    <conflict type="erroneous gene model prediction">
        <sequence resource="EMBL-CDS" id="BAH91721"/>
    </conflict>
</comment>
<reference key="1">
    <citation type="journal article" date="2005" name="Nature">
        <title>The map-based sequence of the rice genome.</title>
        <authorList>
            <consortium name="International rice genome sequencing project (IRGSP)"/>
        </authorList>
    </citation>
    <scope>NUCLEOTIDE SEQUENCE [LARGE SCALE GENOMIC DNA]</scope>
    <source>
        <strain>cv. Nipponbare</strain>
    </source>
</reference>
<reference key="2">
    <citation type="journal article" date="2008" name="Nucleic Acids Res.">
        <title>The rice annotation project database (RAP-DB): 2008 update.</title>
        <authorList>
            <consortium name="The rice annotation project (RAP)"/>
        </authorList>
    </citation>
    <scope>GENOME REANNOTATION</scope>
    <source>
        <strain>cv. Nipponbare</strain>
    </source>
</reference>
<reference key="3">
    <citation type="journal article" date="2013" name="Rice">
        <title>Improvement of the Oryza sativa Nipponbare reference genome using next generation sequence and optical map data.</title>
        <authorList>
            <person name="Kawahara Y."/>
            <person name="de la Bastide M."/>
            <person name="Hamilton J.P."/>
            <person name="Kanamori H."/>
            <person name="McCombie W.R."/>
            <person name="Ouyang S."/>
            <person name="Schwartz D.C."/>
            <person name="Tanaka T."/>
            <person name="Wu J."/>
            <person name="Zhou S."/>
            <person name="Childs K.L."/>
            <person name="Davidson R.M."/>
            <person name="Lin H."/>
            <person name="Quesada-Ocampo L."/>
            <person name="Vaillancourt B."/>
            <person name="Sakai H."/>
            <person name="Lee S.S."/>
            <person name="Kim J."/>
            <person name="Numa H."/>
            <person name="Itoh T."/>
            <person name="Buell C.R."/>
            <person name="Matsumoto T."/>
        </authorList>
    </citation>
    <scope>GENOME REANNOTATION</scope>
    <source>
        <strain>cv. Nipponbare</strain>
    </source>
</reference>
<reference key="4">
    <citation type="submission" date="2006-10" db="EMBL/GenBank/DDBJ databases">
        <title>Oryza sativa full length cDNA.</title>
        <authorList>
            <consortium name="The rice full-length cDNA consortium"/>
        </authorList>
    </citation>
    <scope>NUCLEOTIDE SEQUENCE [LARGE SCALE MRNA]</scope>
    <source>
        <strain>cv. Nipponbare</strain>
        <tissue>Pistil</tissue>
    </source>
</reference>
<accession>Q6H4N0</accession>
<accession>A0A0P0VJN2</accession>
<accession>C7IYT4</accession>
<organism>
    <name type="scientific">Oryza sativa subsp. japonica</name>
    <name type="common">Rice</name>
    <dbReference type="NCBI Taxonomy" id="39947"/>
    <lineage>
        <taxon>Eukaryota</taxon>
        <taxon>Viridiplantae</taxon>
        <taxon>Streptophyta</taxon>
        <taxon>Embryophyta</taxon>
        <taxon>Tracheophyta</taxon>
        <taxon>Spermatophyta</taxon>
        <taxon>Magnoliopsida</taxon>
        <taxon>Liliopsida</taxon>
        <taxon>Poales</taxon>
        <taxon>Poaceae</taxon>
        <taxon>BOP clade</taxon>
        <taxon>Oryzoideae</taxon>
        <taxon>Oryzeae</taxon>
        <taxon>Oryzinae</taxon>
        <taxon>Oryza</taxon>
        <taxon>Oryza sativa</taxon>
    </lineage>
</organism>
<gene>
    <name type="ordered locus">Os02g0520750</name>
    <name type="ordered locus">LOC_Os02g32110</name>
    <name type="ORF">OSJNBb0003H22.12</name>
</gene>
<name>GT21_ORYSJ</name>
<keyword id="KW-0961">Cell wall biogenesis/degradation</keyword>
<keyword id="KW-0325">Glycoprotein</keyword>
<keyword id="KW-0328">Glycosyltransferase</keyword>
<keyword id="KW-0333">Golgi apparatus</keyword>
<keyword id="KW-0472">Membrane</keyword>
<keyword id="KW-1185">Reference proteome</keyword>
<keyword id="KW-0735">Signal-anchor</keyword>
<keyword id="KW-0808">Transferase</keyword>
<keyword id="KW-0812">Transmembrane</keyword>
<keyword id="KW-1133">Transmembrane helix</keyword>
<protein>
    <recommendedName>
        <fullName>Probable glucuronosyltransferase Os02g0520750</fullName>
        <ecNumber>2.4.-.-</ecNumber>
    </recommendedName>
</protein>
<feature type="chain" id="PRO_0000407570" description="Probable glucuronosyltransferase Os02g0520750">
    <location>
        <begin position="1"/>
        <end position="434"/>
    </location>
</feature>
<feature type="topological domain" description="Cytoplasmic" evidence="2">
    <location>
        <begin position="1"/>
        <end position="10"/>
    </location>
</feature>
<feature type="transmembrane region" description="Helical; Signal-anchor for type II membrane protein" evidence="2">
    <location>
        <begin position="11"/>
        <end position="31"/>
    </location>
</feature>
<feature type="topological domain" description="Lumenal" evidence="2">
    <location>
        <begin position="32"/>
        <end position="434"/>
    </location>
</feature>
<feature type="glycosylation site" description="N-linked (GlcNAc...) asparagine" evidence="2">
    <location>
        <position position="160"/>
    </location>
</feature>
<feature type="glycosylation site" description="N-linked (GlcNAc...) asparagine" evidence="2">
    <location>
        <position position="421"/>
    </location>
</feature>
<evidence type="ECO:0000250" key="1"/>
<evidence type="ECO:0000255" key="2"/>
<evidence type="ECO:0000305" key="3"/>
<sequence>MVGARAGRVPAAAAAAAAVLIVAACVFSSLAGAAAAAEVVGGAAQGNTERISGSAGDVLEDNPVGRLKVFVYDLPSKYNKRIVAKDPRCLNHMFAAEIFMHRFLLSSAVRTLNPEQADWFYAPVYTTCDLTHAGLPLPFKSPRMMRSAIQFLSRKWPFWNRTDGADHFFVVPHDFGACFHYQEEKAIERGILPLLRRATLVQTFGQKNHVCLKEGSITIPPYAPPQKMQAHLIPPDTPRSIFVYFRGLFYDNGNDPEGGYYARGARASLWENFKNNPLFDISTEHPATYYEDMQRSVFCLCPLGWAPWSPRLVEAVVFGCIPVIIADDIVLPFADAIPWDEIGVFVDEEDVPRLDSILTSIPIDDILRKQRLLANPSMKQAMLFPQPAQPRDAFHQILNGLARKLPHPDSVYLKPGEKHLNWTAGPVADLKPWK</sequence>